<comment type="function">
    <text evidence="1 6">Catalyzes the hydrolysis of the gamma-glutamyl amide bond of hercynyl-gamma-L-glutamyl-L-cysteine sulfoxide to produce hercynylcysteine sulfoxide, a step in the biosynthesis pathway of ergothioneine (By similarity). ERG is one of the major redox buffers which protects bacteria against redox stressors and antibiotics; loss of ERG or mycothiol (MSH, the other major redox buffer in this bacteria) leads to respiratory alterations and bioenergetic deficiencies that negatively impact virulence (PubMed:26774486).</text>
</comment>
<comment type="catalytic activity">
    <reaction evidence="1">
        <text>gamma-L-glutamyl-hercynylcysteine S-oxide + H2O = S-(hercyn-2-yl)-L-cysteine S-oxide + L-glutamate</text>
        <dbReference type="Rhea" id="RHEA:42684"/>
        <dbReference type="ChEBI" id="CHEBI:15377"/>
        <dbReference type="ChEBI" id="CHEBI:29985"/>
        <dbReference type="ChEBI" id="CHEBI:82703"/>
        <dbReference type="ChEBI" id="CHEBI:82706"/>
        <dbReference type="EC" id="3.5.1.118"/>
    </reaction>
</comment>
<comment type="pathway">
    <text evidence="1 6">Amino-acid biosynthesis; ergothioneine biosynthesis.</text>
</comment>
<comment type="induction">
    <text evidence="3">Expressed in log phase, part of the egtA-egtB-egtC-egtD operon, which does not include egtE (PubMed:26774486).</text>
</comment>
<comment type="sequence caution" evidence="5">
    <conflict type="erroneous initiation">
        <sequence resource="EMBL-CDS" id="AAK48172"/>
    </conflict>
    <text>Truncated N-terminus.</text>
</comment>
<accession>Q8VIV2</accession>
<gene>
    <name evidence="4" type="primary">egtC</name>
    <name type="ordered locus">MT3805</name>
</gene>
<keyword id="KW-0315">Glutamine amidotransferase</keyword>
<keyword id="KW-0378">Hydrolase</keyword>
<keyword id="KW-1185">Reference proteome</keyword>
<feature type="chain" id="PRO_0000439068" description="Gamma-glutamyl-hercynylcysteine sulfoxide hydrolase">
    <location>
        <begin position="1"/>
        <end position="233"/>
    </location>
</feature>
<feature type="domain" description="Glutamine amidotransferase type-2" evidence="2">
    <location>
        <begin position="2"/>
        <end position="233"/>
    </location>
</feature>
<feature type="active site" description="Nucleophile" evidence="2">
    <location>
        <position position="2"/>
    </location>
</feature>
<sequence length="233" mass="24601">MCRHLGWLGAQVAVSSLVLDPPQGLRVQSYAPRRQKHGLMNADGWGVGFFDGAIPRRWRSAAPLWGDTSFHSVAPALRSHCILAAVRSATVGMPIEVSATPPFTDGHWLLAHNGVVDRAVLPAGPAAESVCDSAILAATIFAHGLDALGDTIVKVGAADPNARLNILAANGSRLIATTWGDTLSILRRADGVVLASEPYDDDSGWGDVPDRHLVEVTQKGVTLTALDRAKGPR</sequence>
<reference key="1">
    <citation type="journal article" date="2002" name="J. Bacteriol.">
        <title>Whole-genome comparison of Mycobacterium tuberculosis clinical and laboratory strains.</title>
        <authorList>
            <person name="Fleischmann R.D."/>
            <person name="Alland D."/>
            <person name="Eisen J.A."/>
            <person name="Carpenter L."/>
            <person name="White O."/>
            <person name="Peterson J.D."/>
            <person name="DeBoy R.T."/>
            <person name="Dodson R.J."/>
            <person name="Gwinn M.L."/>
            <person name="Haft D.H."/>
            <person name="Hickey E.K."/>
            <person name="Kolonay J.F."/>
            <person name="Nelson W.C."/>
            <person name="Umayam L.A."/>
            <person name="Ermolaeva M.D."/>
            <person name="Salzberg S.L."/>
            <person name="Delcher A."/>
            <person name="Utterback T.R."/>
            <person name="Weidman J.F."/>
            <person name="Khouri H.M."/>
            <person name="Gill J."/>
            <person name="Mikula A."/>
            <person name="Bishai W."/>
            <person name="Jacobs W.R. Jr."/>
            <person name="Venter J.C."/>
            <person name="Fraser C.M."/>
        </authorList>
    </citation>
    <scope>NUCLEOTIDE SEQUENCE [LARGE SCALE GENOMIC DNA]</scope>
    <source>
        <strain>CDC 1551 / Oshkosh</strain>
    </source>
</reference>
<reference key="2">
    <citation type="journal article" date="2016" name="Cell Rep.">
        <title>Ergothioneine maintains redox and bioenergetic homeostasis essential for drug susceptibility and virulence of Mycobacterium tuberculosis.</title>
        <authorList>
            <person name="Saini V."/>
            <person name="Cumming B.M."/>
            <person name="Guidry L."/>
            <person name="Lamprecht D.A."/>
            <person name="Adamson J.H."/>
            <person name="Reddy V.P."/>
            <person name="Chinta K.C."/>
            <person name="Mazorodze J.H."/>
            <person name="Glasgow J.N."/>
            <person name="Richard-Greenblatt M."/>
            <person name="Gomez-Velasco A."/>
            <person name="Bach H."/>
            <person name="Av-Gay Y."/>
            <person name="Eoh H."/>
            <person name="Rhee K."/>
            <person name="Steyn A.J."/>
        </authorList>
    </citation>
    <scope>FUNCTION</scope>
    <scope>PATHWAY</scope>
    <scope>INDUCTION</scope>
    <scope>OPERON STRUCTURE</scope>
    <source>
        <strain>CDC 1551 / Oshkosh</strain>
    </source>
</reference>
<proteinExistence type="evidence at transcript level"/>
<protein>
    <recommendedName>
        <fullName>Gamma-glutamyl-hercynylcysteine sulfoxide hydrolase</fullName>
        <ecNumber evidence="1">3.5.1.118</ecNumber>
    </recommendedName>
    <alternativeName>
        <fullName>Gamma-glutamyl hercynylcysteine S-oxide hydrolase</fullName>
    </alternativeName>
</protein>
<dbReference type="EC" id="3.5.1.118" evidence="1"/>
<dbReference type="EMBL" id="AE000516">
    <property type="protein sequence ID" value="AAK48172.1"/>
    <property type="status" value="ALT_INIT"/>
    <property type="molecule type" value="Genomic_DNA"/>
</dbReference>
<dbReference type="RefSeq" id="WP_042507709.1">
    <property type="nucleotide sequence ID" value="NC_002755.2"/>
</dbReference>
<dbReference type="SMR" id="Q8VIV2"/>
<dbReference type="KEGG" id="mtc:MT3805"/>
<dbReference type="HOGENOM" id="CLU_042555_3_0_11"/>
<dbReference type="UniPathway" id="UPA01014"/>
<dbReference type="Proteomes" id="UP000001020">
    <property type="component" value="Chromosome"/>
</dbReference>
<dbReference type="GO" id="GO:0016811">
    <property type="term" value="F:hydrolase activity, acting on carbon-nitrogen (but not peptide) bonds, in linear amides"/>
    <property type="evidence" value="ECO:0007669"/>
    <property type="project" value="UniProtKB-UniRule"/>
</dbReference>
<dbReference type="GO" id="GO:0052699">
    <property type="term" value="P:ergothioneine biosynthetic process"/>
    <property type="evidence" value="ECO:0007669"/>
    <property type="project" value="UniProtKB-UniRule"/>
</dbReference>
<dbReference type="CDD" id="cd01908">
    <property type="entry name" value="YafJ"/>
    <property type="match status" value="1"/>
</dbReference>
<dbReference type="FunFam" id="3.60.20.10:FF:000080">
    <property type="entry name" value="Gamma-glutamyl-hercynylcysteine sulfoxide hydrolase"/>
    <property type="match status" value="1"/>
</dbReference>
<dbReference type="Gene3D" id="3.60.20.10">
    <property type="entry name" value="Glutamine Phosphoribosylpyrophosphate, subunit 1, domain 1"/>
    <property type="match status" value="1"/>
</dbReference>
<dbReference type="HAMAP" id="MF_02036">
    <property type="entry name" value="EgtC"/>
    <property type="match status" value="1"/>
</dbReference>
<dbReference type="InterPro" id="IPR017808">
    <property type="entry name" value="EgtC"/>
</dbReference>
<dbReference type="InterPro" id="IPR026869">
    <property type="entry name" value="EgtC-like"/>
</dbReference>
<dbReference type="InterPro" id="IPR032889">
    <property type="entry name" value="EgtC_Actinobacteria"/>
</dbReference>
<dbReference type="InterPro" id="IPR052373">
    <property type="entry name" value="Gamma-glu_amide_hydrolase"/>
</dbReference>
<dbReference type="InterPro" id="IPR017932">
    <property type="entry name" value="GATase_2_dom"/>
</dbReference>
<dbReference type="InterPro" id="IPR029055">
    <property type="entry name" value="Ntn_hydrolases_N"/>
</dbReference>
<dbReference type="NCBIfam" id="TIGR03442">
    <property type="entry name" value="ergothioneine biosynthesis protein EgtC"/>
    <property type="match status" value="1"/>
</dbReference>
<dbReference type="PANTHER" id="PTHR43187:SF2">
    <property type="entry name" value="GAMMA-GLUTAMYL-HERCYNYLCYSTEINE SULFOXIDE HYDROLASE"/>
    <property type="match status" value="1"/>
</dbReference>
<dbReference type="PANTHER" id="PTHR43187">
    <property type="entry name" value="GLUTAMINE AMIDOTRANSFERASE DUG3-RELATED"/>
    <property type="match status" value="1"/>
</dbReference>
<dbReference type="Pfam" id="PF13230">
    <property type="entry name" value="GATase_4"/>
    <property type="match status" value="1"/>
</dbReference>
<dbReference type="SUPFAM" id="SSF56235">
    <property type="entry name" value="N-terminal nucleophile aminohydrolases (Ntn hydrolases)"/>
    <property type="match status" value="1"/>
</dbReference>
<dbReference type="PROSITE" id="PS51278">
    <property type="entry name" value="GATASE_TYPE_2"/>
    <property type="match status" value="1"/>
</dbReference>
<name>EGTC_MYCTO</name>
<evidence type="ECO:0000250" key="1">
    <source>
        <dbReference type="UniProtKB" id="A0R5M9"/>
    </source>
</evidence>
<evidence type="ECO:0000255" key="2">
    <source>
        <dbReference type="PROSITE-ProRule" id="PRU00609"/>
    </source>
</evidence>
<evidence type="ECO:0000269" key="3">
    <source>
    </source>
</evidence>
<evidence type="ECO:0000303" key="4">
    <source>
    </source>
</evidence>
<evidence type="ECO:0000305" key="5"/>
<evidence type="ECO:0000305" key="6">
    <source>
    </source>
</evidence>
<organism>
    <name type="scientific">Mycobacterium tuberculosis (strain CDC 1551 / Oshkosh)</name>
    <dbReference type="NCBI Taxonomy" id="83331"/>
    <lineage>
        <taxon>Bacteria</taxon>
        <taxon>Bacillati</taxon>
        <taxon>Actinomycetota</taxon>
        <taxon>Actinomycetes</taxon>
        <taxon>Mycobacteriales</taxon>
        <taxon>Mycobacteriaceae</taxon>
        <taxon>Mycobacterium</taxon>
        <taxon>Mycobacterium tuberculosis complex</taxon>
    </lineage>
</organism>